<gene>
    <name type="primary">HAK1</name>
</gene>
<evidence type="ECO:0000255" key="1"/>
<evidence type="ECO:0000256" key="2">
    <source>
        <dbReference type="SAM" id="MobiDB-lite"/>
    </source>
</evidence>
<evidence type="ECO:0000305" key="3"/>
<organism>
    <name type="scientific">Schwanniomyces occidentalis</name>
    <name type="common">Yeast</name>
    <name type="synonym">Debaryomyces occidentalis</name>
    <dbReference type="NCBI Taxonomy" id="27300"/>
    <lineage>
        <taxon>Eukaryota</taxon>
        <taxon>Fungi</taxon>
        <taxon>Dikarya</taxon>
        <taxon>Ascomycota</taxon>
        <taxon>Saccharomycotina</taxon>
        <taxon>Pichiomycetes</taxon>
        <taxon>Debaryomycetaceae</taxon>
        <taxon>Schwanniomyces</taxon>
    </lineage>
</organism>
<reference key="1">
    <citation type="submission" date="1999-07" db="EMBL/GenBank/DDBJ databases">
        <authorList>
            <person name="Rodriguez-Navarro A."/>
        </authorList>
    </citation>
    <scope>NUCLEOTIDE SEQUENCE [GENOMIC DNA]</scope>
</reference>
<reference key="2">
    <citation type="journal article" date="1995" name="EMBO J.">
        <title>A potassium transporter of the yeast Schwanniomyces occidentalis homologous to the Kup system of Escherichia coli has a high concentrative capacity.</title>
        <authorList>
            <person name="Banuelos M.A."/>
            <person name="Klein R.D."/>
            <person name="Alexander-Bowman S.J."/>
            <person name="Rodriguez-Navarro A."/>
        </authorList>
    </citation>
    <scope>NUCLEOTIDE SEQUENCE [GENOMIC DNA] OF 60-821</scope>
</reference>
<keyword id="KW-0325">Glycoprotein</keyword>
<keyword id="KW-0406">Ion transport</keyword>
<keyword id="KW-0472">Membrane</keyword>
<keyword id="KW-0630">Potassium</keyword>
<keyword id="KW-0633">Potassium transport</keyword>
<keyword id="KW-0812">Transmembrane</keyword>
<keyword id="KW-1133">Transmembrane helix</keyword>
<keyword id="KW-0813">Transport</keyword>
<proteinExistence type="inferred from homology"/>
<dbReference type="EMBL" id="U22945">
    <property type="protein sequence ID" value="AAB17122.2"/>
    <property type="molecule type" value="Genomic_DNA"/>
</dbReference>
<dbReference type="PIR" id="S56141">
    <property type="entry name" value="S56141"/>
</dbReference>
<dbReference type="TCDB" id="2.A.72.2.1">
    <property type="family name" value="the k(+) uptake permease (kup) family"/>
</dbReference>
<dbReference type="GlyCosmos" id="P50505">
    <property type="glycosylation" value="1 site, No reported glycans"/>
</dbReference>
<dbReference type="GO" id="GO:0016020">
    <property type="term" value="C:membrane"/>
    <property type="evidence" value="ECO:0007669"/>
    <property type="project" value="UniProtKB-SubCell"/>
</dbReference>
<dbReference type="GO" id="GO:0015079">
    <property type="term" value="F:potassium ion transmembrane transporter activity"/>
    <property type="evidence" value="ECO:0007669"/>
    <property type="project" value="InterPro"/>
</dbReference>
<dbReference type="InterPro" id="IPR003855">
    <property type="entry name" value="K+_transporter"/>
</dbReference>
<dbReference type="InterPro" id="IPR053952">
    <property type="entry name" value="K_trans_C"/>
</dbReference>
<dbReference type="InterPro" id="IPR053951">
    <property type="entry name" value="K_trans_N"/>
</dbReference>
<dbReference type="NCBIfam" id="TIGR00794">
    <property type="entry name" value="kup"/>
    <property type="match status" value="1"/>
</dbReference>
<dbReference type="PANTHER" id="PTHR30540:SF83">
    <property type="entry name" value="K+ POTASSIUM TRANSPORTER"/>
    <property type="match status" value="1"/>
</dbReference>
<dbReference type="PANTHER" id="PTHR30540">
    <property type="entry name" value="OSMOTIC STRESS POTASSIUM TRANSPORTER"/>
    <property type="match status" value="1"/>
</dbReference>
<dbReference type="Pfam" id="PF02705">
    <property type="entry name" value="K_trans"/>
    <property type="match status" value="1"/>
</dbReference>
<dbReference type="Pfam" id="PF22776">
    <property type="entry name" value="K_trans_C"/>
    <property type="match status" value="1"/>
</dbReference>
<comment type="function">
    <text>Major high-affinity potassium uptake protein.</text>
</comment>
<comment type="subcellular location">
    <subcellularLocation>
        <location>Membrane</location>
        <topology>Multi-pass membrane protein</topology>
    </subcellularLocation>
</comment>
<comment type="similarity">
    <text evidence="3">Belongs to the HAK/KUP transporter (TC 2.A.72) family.</text>
</comment>
<protein>
    <recommendedName>
        <fullName>High affinity potassium transporter</fullName>
    </recommendedName>
</protein>
<feature type="chain" id="PRO_0000209105" description="High affinity potassium transporter">
    <location>
        <begin position="1"/>
        <end position="821"/>
    </location>
</feature>
<feature type="topological domain" description="Cytoplasmic" evidence="1">
    <location>
        <begin position="1"/>
        <end position="57"/>
    </location>
</feature>
<feature type="transmembrane region" description="Helical" evidence="1">
    <location>
        <begin position="58"/>
        <end position="78"/>
    </location>
</feature>
<feature type="topological domain" description="Extracellular" evidence="1">
    <location>
        <begin position="79"/>
        <end position="101"/>
    </location>
</feature>
<feature type="transmembrane region" description="Helical" evidence="1">
    <location>
        <begin position="102"/>
        <end position="122"/>
    </location>
</feature>
<feature type="topological domain" description="Cytoplasmic" evidence="1">
    <location>
        <begin position="123"/>
        <end position="190"/>
    </location>
</feature>
<feature type="transmembrane region" description="Helical" evidence="1">
    <location>
        <begin position="191"/>
        <end position="211"/>
    </location>
</feature>
<feature type="topological domain" description="Extracellular" evidence="1">
    <location>
        <begin position="212"/>
        <end position="238"/>
    </location>
</feature>
<feature type="transmembrane region" description="Helical" evidence="1">
    <location>
        <begin position="239"/>
        <end position="259"/>
    </location>
</feature>
<feature type="topological domain" description="Cytoplasmic" evidence="1">
    <location>
        <position position="260"/>
    </location>
</feature>
<feature type="transmembrane region" description="Helical" evidence="1">
    <location>
        <begin position="261"/>
        <end position="281"/>
    </location>
</feature>
<feature type="topological domain" description="Extracellular" evidence="1">
    <location>
        <begin position="282"/>
        <end position="306"/>
    </location>
</feature>
<feature type="transmembrane region" description="Helical" evidence="1">
    <location>
        <begin position="307"/>
        <end position="327"/>
    </location>
</feature>
<feature type="topological domain" description="Cytoplasmic" evidence="1">
    <location>
        <begin position="328"/>
        <end position="340"/>
    </location>
</feature>
<feature type="transmembrane region" description="Helical" evidence="1">
    <location>
        <begin position="341"/>
        <end position="361"/>
    </location>
</feature>
<feature type="topological domain" description="Extracellular" evidence="1">
    <location>
        <begin position="362"/>
        <end position="386"/>
    </location>
</feature>
<feature type="transmembrane region" description="Helical" evidence="1">
    <location>
        <begin position="387"/>
        <end position="407"/>
    </location>
</feature>
<feature type="topological domain" description="Cytoplasmic" evidence="1">
    <location>
        <begin position="408"/>
        <end position="434"/>
    </location>
</feature>
<feature type="transmembrane region" description="Helical" evidence="1">
    <location>
        <begin position="435"/>
        <end position="455"/>
    </location>
</feature>
<feature type="topological domain" description="Extracellular" evidence="1">
    <location>
        <begin position="456"/>
        <end position="463"/>
    </location>
</feature>
<feature type="transmembrane region" description="Helical" evidence="1">
    <location>
        <begin position="464"/>
        <end position="484"/>
    </location>
</feature>
<feature type="topological domain" description="Cytoplasmic" evidence="1">
    <location>
        <begin position="485"/>
        <end position="491"/>
    </location>
</feature>
<feature type="transmembrane region" description="Helical" evidence="1">
    <location>
        <begin position="492"/>
        <end position="512"/>
    </location>
</feature>
<feature type="topological domain" description="Extracellular" evidence="1">
    <location>
        <begin position="513"/>
        <end position="516"/>
    </location>
</feature>
<feature type="transmembrane region" description="Helical" evidence="1">
    <location>
        <begin position="517"/>
        <end position="537"/>
    </location>
</feature>
<feature type="topological domain" description="Cytoplasmic" evidence="1">
    <location>
        <begin position="538"/>
        <end position="821"/>
    </location>
</feature>
<feature type="region of interest" description="Disordered" evidence="2">
    <location>
        <begin position="1"/>
        <end position="47"/>
    </location>
</feature>
<feature type="compositionally biased region" description="Polar residues" evidence="2">
    <location>
        <begin position="1"/>
        <end position="10"/>
    </location>
</feature>
<feature type="compositionally biased region" description="Low complexity" evidence="2">
    <location>
        <begin position="17"/>
        <end position="27"/>
    </location>
</feature>
<feature type="glycosylation site" description="N-linked (GlcNAc...) asparagine" evidence="1">
    <location>
        <position position="460"/>
    </location>
</feature>
<sequence length="821" mass="91935">MSDSQSNKQNQGEDDNNVSSSIESNENYPFRLNDEESEPQSSTTESMLKAKKQSWRQVLMLGFSSLGAIYGDIGTSPLYVLNSIKYPNSSPTEEDIYGAISIIFYLFTFIVIFKYILIVLFLGTNDGEGGQVAIYAKIARSLKIGPKGVHIPGSPEKTDLELLARAETSSSFKSSNLFLNKASGFKTNPKLIKFISKFILFGCFFGCSLVMSDGLLTPTTSVLSAIAGIQIANPSFNDVLAVSEVVLIVLFLIQQFGSNKISFTFAPIIFLWLIGLIISGIYNIVKFHPAVFKSLSPYYAIQLLKHSGIDVFSGAMLSITGTEAMFADVGHFGRLPIQLTLTLFVYPALIICYLGQGAYIIKHPEALSNPFFYSIPGGLNSWIYWVMFVLATLSTIIASQALILGVFSITSQLINLDCFPNFKIIHVSKKYAGKVYIPAINWLLMIGVCATTAGFKNSNNVTAAYGLGITLDFLVTSSLIMVCMTYVYNWNILIPITYALIFLPLEVIMVISNLKKITHGAWFPLMMSGIFMMFLSFWRWARSRKVNQDFKTRIRIGDLYPELKKQPPQSETVDLNDRGRPMSIVNSSNEELVEYGVTLPKILKTNNNQLKVQSKFGLMNLKKYDGIAIMYNDSSVHTLNSPNTVPQVYGKLVSSFSSIPSVFIFCSIRVLSIPTVPNDERVLIGSMKIPGHYRCIIRYGFMEEILIDKELNNHILNSIPDINELAIKFNLNNKCILTKPCTIPILHIFENNLIRSHDYSSEEHETKNPLVKCKRFIRKILINHIFSPIYSDFQSNGKFLKISDEDEESEKKMFLGGVVRI</sequence>
<accession>P50505</accession>
<name>HAK1_SCHOC</name>